<proteinExistence type="inferred from homology"/>
<gene>
    <name evidence="1" type="primary">tatA</name>
    <name type="ordered locus">Paes_0539</name>
</gene>
<name>TATA_PROA2</name>
<organism>
    <name type="scientific">Prosthecochloris aestuarii (strain DSM 271 / SK 413)</name>
    <dbReference type="NCBI Taxonomy" id="290512"/>
    <lineage>
        <taxon>Bacteria</taxon>
        <taxon>Pseudomonadati</taxon>
        <taxon>Chlorobiota</taxon>
        <taxon>Chlorobiia</taxon>
        <taxon>Chlorobiales</taxon>
        <taxon>Chlorobiaceae</taxon>
        <taxon>Prosthecochloris</taxon>
    </lineage>
</organism>
<evidence type="ECO:0000255" key="1">
    <source>
        <dbReference type="HAMAP-Rule" id="MF_00236"/>
    </source>
</evidence>
<evidence type="ECO:0000256" key="2">
    <source>
        <dbReference type="SAM" id="MobiDB-lite"/>
    </source>
</evidence>
<feature type="chain" id="PRO_1000197893" description="Sec-independent protein translocase protein TatA">
    <location>
        <begin position="1"/>
        <end position="70"/>
    </location>
</feature>
<feature type="transmembrane region" description="Helical" evidence="1">
    <location>
        <begin position="1"/>
        <end position="21"/>
    </location>
</feature>
<feature type="region of interest" description="Disordered" evidence="2">
    <location>
        <begin position="47"/>
        <end position="70"/>
    </location>
</feature>
<feature type="compositionally biased region" description="Basic and acidic residues" evidence="2">
    <location>
        <begin position="57"/>
        <end position="70"/>
    </location>
</feature>
<reference key="1">
    <citation type="submission" date="2008-06" db="EMBL/GenBank/DDBJ databases">
        <title>Complete sequence of chromosome of Prosthecochloris aestuarii DSM 271.</title>
        <authorList>
            <consortium name="US DOE Joint Genome Institute"/>
            <person name="Lucas S."/>
            <person name="Copeland A."/>
            <person name="Lapidus A."/>
            <person name="Glavina del Rio T."/>
            <person name="Dalin E."/>
            <person name="Tice H."/>
            <person name="Bruce D."/>
            <person name="Goodwin L."/>
            <person name="Pitluck S."/>
            <person name="Schmutz J."/>
            <person name="Larimer F."/>
            <person name="Land M."/>
            <person name="Hauser L."/>
            <person name="Kyrpides N."/>
            <person name="Anderson I."/>
            <person name="Liu Z."/>
            <person name="Li T."/>
            <person name="Zhao F."/>
            <person name="Overmann J."/>
            <person name="Bryant D.A."/>
            <person name="Richardson P."/>
        </authorList>
    </citation>
    <scope>NUCLEOTIDE SEQUENCE [LARGE SCALE GENOMIC DNA]</scope>
    <source>
        <strain>DSM 271 / SK 413</strain>
    </source>
</reference>
<accession>B4S5J8</accession>
<dbReference type="EMBL" id="CP001108">
    <property type="protein sequence ID" value="ACF45595.1"/>
    <property type="molecule type" value="Genomic_DNA"/>
</dbReference>
<dbReference type="RefSeq" id="WP_012505132.1">
    <property type="nucleotide sequence ID" value="NC_011059.1"/>
</dbReference>
<dbReference type="SMR" id="B4S5J8"/>
<dbReference type="STRING" id="290512.Paes_0539"/>
<dbReference type="KEGG" id="paa:Paes_0539"/>
<dbReference type="eggNOG" id="COG1826">
    <property type="taxonomic scope" value="Bacteria"/>
</dbReference>
<dbReference type="HOGENOM" id="CLU_086034_6_2_10"/>
<dbReference type="Proteomes" id="UP000002725">
    <property type="component" value="Chromosome"/>
</dbReference>
<dbReference type="GO" id="GO:0033281">
    <property type="term" value="C:TAT protein transport complex"/>
    <property type="evidence" value="ECO:0007669"/>
    <property type="project" value="UniProtKB-UniRule"/>
</dbReference>
<dbReference type="GO" id="GO:0008320">
    <property type="term" value="F:protein transmembrane transporter activity"/>
    <property type="evidence" value="ECO:0007669"/>
    <property type="project" value="UniProtKB-UniRule"/>
</dbReference>
<dbReference type="GO" id="GO:0043953">
    <property type="term" value="P:protein transport by the Tat complex"/>
    <property type="evidence" value="ECO:0007669"/>
    <property type="project" value="UniProtKB-UniRule"/>
</dbReference>
<dbReference type="Gene3D" id="1.20.5.3310">
    <property type="match status" value="1"/>
</dbReference>
<dbReference type="HAMAP" id="MF_00236">
    <property type="entry name" value="TatA_E"/>
    <property type="match status" value="1"/>
</dbReference>
<dbReference type="InterPro" id="IPR003369">
    <property type="entry name" value="TatA/B/E"/>
</dbReference>
<dbReference type="InterPro" id="IPR006312">
    <property type="entry name" value="TatA/E"/>
</dbReference>
<dbReference type="NCBIfam" id="TIGR01411">
    <property type="entry name" value="tatAE"/>
    <property type="match status" value="1"/>
</dbReference>
<dbReference type="PANTHER" id="PTHR42982">
    <property type="entry name" value="SEC-INDEPENDENT PROTEIN TRANSLOCASE PROTEIN TATA"/>
    <property type="match status" value="1"/>
</dbReference>
<dbReference type="PANTHER" id="PTHR42982:SF1">
    <property type="entry name" value="SEC-INDEPENDENT PROTEIN TRANSLOCASE PROTEIN TATA"/>
    <property type="match status" value="1"/>
</dbReference>
<dbReference type="Pfam" id="PF02416">
    <property type="entry name" value="TatA_B_E"/>
    <property type="match status" value="1"/>
</dbReference>
<dbReference type="PRINTS" id="PR01506">
    <property type="entry name" value="TATBPROTEIN"/>
</dbReference>
<keyword id="KW-0997">Cell inner membrane</keyword>
<keyword id="KW-1003">Cell membrane</keyword>
<keyword id="KW-0472">Membrane</keyword>
<keyword id="KW-0653">Protein transport</keyword>
<keyword id="KW-0811">Translocation</keyword>
<keyword id="KW-0812">Transmembrane</keyword>
<keyword id="KW-1133">Transmembrane helix</keyword>
<keyword id="KW-0813">Transport</keyword>
<protein>
    <recommendedName>
        <fullName evidence="1">Sec-independent protein translocase protein TatA</fullName>
    </recommendedName>
</protein>
<comment type="function">
    <text evidence="1">Part of the twin-arginine translocation (Tat) system that transports large folded proteins containing a characteristic twin-arginine motif in their signal peptide across membranes. TatA could form the protein-conducting channel of the Tat system.</text>
</comment>
<comment type="subunit">
    <text evidence="1">Forms a complex with TatC.</text>
</comment>
<comment type="subcellular location">
    <subcellularLocation>
        <location evidence="1">Cell inner membrane</location>
        <topology evidence="1">Single-pass membrane protein</topology>
    </subcellularLocation>
</comment>
<comment type="similarity">
    <text evidence="1">Belongs to the TatA/E family.</text>
</comment>
<sequence length="70" mass="7718">MFGLGGQELLLILLIILLLFGAKKLPELAKGLGKGMKEFKKAQTEIEDEFNKAMSDPPEKKEKESPSDKG</sequence>